<evidence type="ECO:0000255" key="1">
    <source>
        <dbReference type="HAMAP-Rule" id="MF_01225"/>
    </source>
</evidence>
<evidence type="ECO:0000255" key="2">
    <source>
        <dbReference type="PROSITE-ProRule" id="PRU01266"/>
    </source>
</evidence>
<reference key="1">
    <citation type="submission" date="2007-06" db="EMBL/GenBank/DDBJ databases">
        <title>Complete sequence of Methanococcus maripaludis C7.</title>
        <authorList>
            <consortium name="US DOE Joint Genome Institute"/>
            <person name="Copeland A."/>
            <person name="Lucas S."/>
            <person name="Lapidus A."/>
            <person name="Barry K."/>
            <person name="Glavina del Rio T."/>
            <person name="Dalin E."/>
            <person name="Tice H."/>
            <person name="Pitluck S."/>
            <person name="Clum A."/>
            <person name="Schmutz J."/>
            <person name="Larimer F."/>
            <person name="Land M."/>
            <person name="Hauser L."/>
            <person name="Kyrpides N."/>
            <person name="Anderson I."/>
            <person name="Sieprawska-Lupa M."/>
            <person name="Whitman W.B."/>
            <person name="Richardson P."/>
        </authorList>
    </citation>
    <scope>NUCLEOTIDE SEQUENCE [LARGE SCALE GENOMIC DNA]</scope>
    <source>
        <strain>C7 / ATCC BAA-1331</strain>
    </source>
</reference>
<name>MOAA_METM7</name>
<dbReference type="EC" id="4.1.99.22" evidence="1"/>
<dbReference type="EMBL" id="CP000745">
    <property type="protein sequence ID" value="ABR66648.1"/>
    <property type="molecule type" value="Genomic_DNA"/>
</dbReference>
<dbReference type="SMR" id="A6VJM2"/>
<dbReference type="STRING" id="426368.MmarC7_1590"/>
<dbReference type="KEGG" id="mmz:MmarC7_1590"/>
<dbReference type="eggNOG" id="arCOG00930">
    <property type="taxonomic scope" value="Archaea"/>
</dbReference>
<dbReference type="HOGENOM" id="CLU_009273_0_1_2"/>
<dbReference type="OrthoDB" id="6925at2157"/>
<dbReference type="UniPathway" id="UPA00344"/>
<dbReference type="GO" id="GO:0051539">
    <property type="term" value="F:4 iron, 4 sulfur cluster binding"/>
    <property type="evidence" value="ECO:0007669"/>
    <property type="project" value="UniProtKB-UniRule"/>
</dbReference>
<dbReference type="GO" id="GO:0061799">
    <property type="term" value="F:cyclic pyranopterin monophosphate synthase activity"/>
    <property type="evidence" value="ECO:0007669"/>
    <property type="project" value="TreeGrafter"/>
</dbReference>
<dbReference type="GO" id="GO:0061798">
    <property type="term" value="F:GTP 3',8'-cyclase activity"/>
    <property type="evidence" value="ECO:0007669"/>
    <property type="project" value="UniProtKB-UniRule"/>
</dbReference>
<dbReference type="GO" id="GO:0005525">
    <property type="term" value="F:GTP binding"/>
    <property type="evidence" value="ECO:0007669"/>
    <property type="project" value="UniProtKB-UniRule"/>
</dbReference>
<dbReference type="GO" id="GO:0046872">
    <property type="term" value="F:metal ion binding"/>
    <property type="evidence" value="ECO:0007669"/>
    <property type="project" value="UniProtKB-KW"/>
</dbReference>
<dbReference type="GO" id="GO:1904047">
    <property type="term" value="F:S-adenosyl-L-methionine binding"/>
    <property type="evidence" value="ECO:0007669"/>
    <property type="project" value="UniProtKB-UniRule"/>
</dbReference>
<dbReference type="GO" id="GO:0006777">
    <property type="term" value="P:Mo-molybdopterin cofactor biosynthetic process"/>
    <property type="evidence" value="ECO:0007669"/>
    <property type="project" value="UniProtKB-UniRule"/>
</dbReference>
<dbReference type="CDD" id="cd01335">
    <property type="entry name" value="Radical_SAM"/>
    <property type="match status" value="1"/>
</dbReference>
<dbReference type="Gene3D" id="3.20.20.70">
    <property type="entry name" value="Aldolase class I"/>
    <property type="match status" value="1"/>
</dbReference>
<dbReference type="HAMAP" id="MF_01225_A">
    <property type="entry name" value="MoaA_A"/>
    <property type="match status" value="1"/>
</dbReference>
<dbReference type="InterPro" id="IPR013785">
    <property type="entry name" value="Aldolase_TIM"/>
</dbReference>
<dbReference type="InterPro" id="IPR006638">
    <property type="entry name" value="Elp3/MiaA/NifB-like_rSAM"/>
</dbReference>
<dbReference type="InterPro" id="IPR013485">
    <property type="entry name" value="MoaA_arc"/>
</dbReference>
<dbReference type="InterPro" id="IPR010505">
    <property type="entry name" value="MoaA_twitch"/>
</dbReference>
<dbReference type="InterPro" id="IPR050105">
    <property type="entry name" value="MoCo_biosynth_MoaA/MoaC"/>
</dbReference>
<dbReference type="InterPro" id="IPR007197">
    <property type="entry name" value="rSAM"/>
</dbReference>
<dbReference type="NCBIfam" id="TIGR02668">
    <property type="entry name" value="moaA_archaeal"/>
    <property type="match status" value="1"/>
</dbReference>
<dbReference type="NCBIfam" id="NF001199">
    <property type="entry name" value="PRK00164.2-1"/>
    <property type="match status" value="1"/>
</dbReference>
<dbReference type="PANTHER" id="PTHR22960:SF0">
    <property type="entry name" value="MOLYBDENUM COFACTOR BIOSYNTHESIS PROTEIN 1"/>
    <property type="match status" value="1"/>
</dbReference>
<dbReference type="PANTHER" id="PTHR22960">
    <property type="entry name" value="MOLYBDOPTERIN COFACTOR SYNTHESIS PROTEIN A"/>
    <property type="match status" value="1"/>
</dbReference>
<dbReference type="Pfam" id="PF13353">
    <property type="entry name" value="Fer4_12"/>
    <property type="match status" value="1"/>
</dbReference>
<dbReference type="Pfam" id="PF06463">
    <property type="entry name" value="Mob_synth_C"/>
    <property type="match status" value="1"/>
</dbReference>
<dbReference type="Pfam" id="PF04055">
    <property type="entry name" value="Radical_SAM"/>
    <property type="match status" value="1"/>
</dbReference>
<dbReference type="SFLD" id="SFLDG01383">
    <property type="entry name" value="cyclic_pyranopterin_phosphate"/>
    <property type="match status" value="1"/>
</dbReference>
<dbReference type="SFLD" id="SFLDG01216">
    <property type="entry name" value="thioether_bond_formation_requi"/>
    <property type="match status" value="1"/>
</dbReference>
<dbReference type="SMART" id="SM00729">
    <property type="entry name" value="Elp3"/>
    <property type="match status" value="1"/>
</dbReference>
<dbReference type="SUPFAM" id="SSF102114">
    <property type="entry name" value="Radical SAM enzymes"/>
    <property type="match status" value="1"/>
</dbReference>
<dbReference type="PROSITE" id="PS51918">
    <property type="entry name" value="RADICAL_SAM"/>
    <property type="match status" value="1"/>
</dbReference>
<organism>
    <name type="scientific">Methanococcus maripaludis (strain C7 / ATCC BAA-1331)</name>
    <dbReference type="NCBI Taxonomy" id="426368"/>
    <lineage>
        <taxon>Archaea</taxon>
        <taxon>Methanobacteriati</taxon>
        <taxon>Methanobacteriota</taxon>
        <taxon>Methanomada group</taxon>
        <taxon>Methanococci</taxon>
        <taxon>Methanococcales</taxon>
        <taxon>Methanococcaceae</taxon>
        <taxon>Methanococcus</taxon>
    </lineage>
</organism>
<feature type="chain" id="PRO_1000085699" description="Probable GTP 3',8-cyclase">
    <location>
        <begin position="1"/>
        <end position="298"/>
    </location>
</feature>
<feature type="domain" description="Radical SAM core" evidence="2">
    <location>
        <begin position="4"/>
        <end position="221"/>
    </location>
</feature>
<feature type="binding site" evidence="1">
    <location>
        <position position="13"/>
    </location>
    <ligand>
        <name>GTP</name>
        <dbReference type="ChEBI" id="CHEBI:37565"/>
    </ligand>
</feature>
<feature type="binding site" evidence="1">
    <location>
        <position position="20"/>
    </location>
    <ligand>
        <name>[4Fe-4S] cluster</name>
        <dbReference type="ChEBI" id="CHEBI:49883"/>
        <label>1</label>
        <note>4Fe-4S-S-AdoMet</note>
    </ligand>
</feature>
<feature type="binding site" evidence="1">
    <location>
        <position position="24"/>
    </location>
    <ligand>
        <name>[4Fe-4S] cluster</name>
        <dbReference type="ChEBI" id="CHEBI:49883"/>
        <label>1</label>
        <note>4Fe-4S-S-AdoMet</note>
    </ligand>
</feature>
<feature type="binding site" evidence="1">
    <location>
        <position position="26"/>
    </location>
    <ligand>
        <name>S-adenosyl-L-methionine</name>
        <dbReference type="ChEBI" id="CHEBI:59789"/>
    </ligand>
</feature>
<feature type="binding site" evidence="1">
    <location>
        <position position="27"/>
    </location>
    <ligand>
        <name>[4Fe-4S] cluster</name>
        <dbReference type="ChEBI" id="CHEBI:49883"/>
        <label>1</label>
        <note>4Fe-4S-S-AdoMet</note>
    </ligand>
</feature>
<feature type="binding site" evidence="1">
    <location>
        <position position="61"/>
    </location>
    <ligand>
        <name>GTP</name>
        <dbReference type="ChEBI" id="CHEBI:37565"/>
    </ligand>
</feature>
<feature type="binding site" evidence="1">
    <location>
        <position position="65"/>
    </location>
    <ligand>
        <name>S-adenosyl-L-methionine</name>
        <dbReference type="ChEBI" id="CHEBI:59789"/>
    </ligand>
</feature>
<feature type="binding site" evidence="1">
    <location>
        <position position="91"/>
    </location>
    <ligand>
        <name>GTP</name>
        <dbReference type="ChEBI" id="CHEBI:37565"/>
    </ligand>
</feature>
<feature type="binding site" evidence="1">
    <location>
        <position position="115"/>
    </location>
    <ligand>
        <name>S-adenosyl-L-methionine</name>
        <dbReference type="ChEBI" id="CHEBI:59789"/>
    </ligand>
</feature>
<feature type="binding site" evidence="1">
    <location>
        <position position="152"/>
    </location>
    <ligand>
        <name>GTP</name>
        <dbReference type="ChEBI" id="CHEBI:37565"/>
    </ligand>
</feature>
<feature type="binding site" evidence="1">
    <location>
        <position position="243"/>
    </location>
    <ligand>
        <name>[4Fe-4S] cluster</name>
        <dbReference type="ChEBI" id="CHEBI:49883"/>
        <label>2</label>
        <note>4Fe-4S-substrate</note>
    </ligand>
</feature>
<feature type="binding site" evidence="1">
    <location>
        <position position="246"/>
    </location>
    <ligand>
        <name>[4Fe-4S] cluster</name>
        <dbReference type="ChEBI" id="CHEBI:49883"/>
        <label>2</label>
        <note>4Fe-4S-substrate</note>
    </ligand>
</feature>
<feature type="binding site" evidence="1">
    <location>
        <begin position="248"/>
        <end position="250"/>
    </location>
    <ligand>
        <name>GTP</name>
        <dbReference type="ChEBI" id="CHEBI:37565"/>
    </ligand>
</feature>
<feature type="binding site" evidence="1">
    <location>
        <position position="260"/>
    </location>
    <ligand>
        <name>[4Fe-4S] cluster</name>
        <dbReference type="ChEBI" id="CHEBI:49883"/>
        <label>2</label>
        <note>4Fe-4S-substrate</note>
    </ligand>
</feature>
<keyword id="KW-0004">4Fe-4S</keyword>
<keyword id="KW-0342">GTP-binding</keyword>
<keyword id="KW-0408">Iron</keyword>
<keyword id="KW-0411">Iron-sulfur</keyword>
<keyword id="KW-0456">Lyase</keyword>
<keyword id="KW-0479">Metal-binding</keyword>
<keyword id="KW-0501">Molybdenum cofactor biosynthesis</keyword>
<keyword id="KW-0547">Nucleotide-binding</keyword>
<keyword id="KW-0949">S-adenosyl-L-methionine</keyword>
<comment type="function">
    <text evidence="1">Catalyzes the cyclization of GTP to (8S)-3',8-cyclo-7,8-dihydroguanosine 5'-triphosphate.</text>
</comment>
<comment type="catalytic activity">
    <reaction evidence="1">
        <text>GTP + AH2 + S-adenosyl-L-methionine = (8S)-3',8-cyclo-7,8-dihydroguanosine 5'-triphosphate + 5'-deoxyadenosine + L-methionine + A + H(+)</text>
        <dbReference type="Rhea" id="RHEA:49576"/>
        <dbReference type="ChEBI" id="CHEBI:13193"/>
        <dbReference type="ChEBI" id="CHEBI:15378"/>
        <dbReference type="ChEBI" id="CHEBI:17319"/>
        <dbReference type="ChEBI" id="CHEBI:17499"/>
        <dbReference type="ChEBI" id="CHEBI:37565"/>
        <dbReference type="ChEBI" id="CHEBI:57844"/>
        <dbReference type="ChEBI" id="CHEBI:59789"/>
        <dbReference type="ChEBI" id="CHEBI:131766"/>
        <dbReference type="EC" id="4.1.99.22"/>
    </reaction>
</comment>
<comment type="cofactor">
    <cofactor evidence="1">
        <name>[4Fe-4S] cluster</name>
        <dbReference type="ChEBI" id="CHEBI:49883"/>
    </cofactor>
    <text evidence="1">Binds 2 [4Fe-4S] clusters. Binds 1 [4Fe-4S] cluster coordinated with 3 cysteines and an exchangeable S-adenosyl-L-methionine and 1 [4Fe-4S] cluster coordinated with 3 cysteines and the GTP-derived substrate.</text>
</comment>
<comment type="pathway">
    <text evidence="1">Cofactor biosynthesis; molybdopterin biosynthesis.</text>
</comment>
<comment type="similarity">
    <text evidence="1">Belongs to the radical SAM superfamily. MoaA family.</text>
</comment>
<protein>
    <recommendedName>
        <fullName evidence="1">Probable GTP 3',8-cyclase</fullName>
        <ecNumber evidence="1">4.1.99.22</ecNumber>
    </recommendedName>
    <alternativeName>
        <fullName evidence="1">Molybdenum cofactor biosynthesis protein A</fullName>
    </alternativeName>
</protein>
<gene>
    <name evidence="1" type="primary">moaA</name>
    <name type="ordered locus">MmarC7_1590</name>
</gene>
<accession>A6VJM2</accession>
<sequence>MEDRYGREIRSFRLSITPKCNLKCFYCHKEGRNEEHGKLMSADEIGKIVKSSLEFGVRKIKISGGEPLLRTDLPEIIENIKDDQIKDISLTTNGILLEKYAQKLKDAGLDRVNVSLDTLDPEQYKQITAGGNIESVKKGIEKAIEVGLTPLKVNFLAMDCTINQLPAIMDYCRKIGAILQVIEFIPMEEELKHHHIDVVPIEEEIGKKADQVFTRKFMQNRKKYIVDGLEVEFVRPMDNTEFCGHCTRIRLTYDGYLKPCLLRDDNLVDVANPLRNGEDIRKYFIKCIEEREPFCKAQ</sequence>
<proteinExistence type="inferred from homology"/>